<reference key="1">
    <citation type="journal article" date="2003" name="Proc. Natl. Acad. Sci. U.S.A.">
        <title>Reductive genome evolution in Buchnera aphidicola.</title>
        <authorList>
            <person name="van Ham R.C.H.J."/>
            <person name="Kamerbeek J."/>
            <person name="Palacios C."/>
            <person name="Rausell C."/>
            <person name="Abascal F."/>
            <person name="Bastolla U."/>
            <person name="Fernandez J.M."/>
            <person name="Jimenez L."/>
            <person name="Postigo M."/>
            <person name="Silva F.J."/>
            <person name="Tamames J."/>
            <person name="Viguera E."/>
            <person name="Latorre A."/>
            <person name="Valencia A."/>
            <person name="Moran F."/>
            <person name="Moya A."/>
        </authorList>
    </citation>
    <scope>NUCLEOTIDE SEQUENCE [LARGE SCALE GENOMIC DNA]</scope>
    <source>
        <strain>Bp</strain>
    </source>
</reference>
<evidence type="ECO:0000305" key="1"/>
<gene>
    <name type="ordered locus">bbp_234</name>
</gene>
<sequence length="86" mass="10180">MITITIVYFTNKIQHVKKIKLNIGTPVHEALKILQINIKKNNKIGIYGELVSLNHILNNKDRLEIYRPLKINPRELRKQKINRKLK</sequence>
<keyword id="KW-1185">Reference proteome</keyword>
<protein>
    <recommendedName>
        <fullName>UPF0125 protein bbp_234</fullName>
    </recommendedName>
</protein>
<accession>Q89AN0</accession>
<comment type="similarity">
    <text evidence="1">Belongs to the UPF0125 (RnfH) family.</text>
</comment>
<name>Y234_BUCBP</name>
<proteinExistence type="inferred from homology"/>
<organism>
    <name type="scientific">Buchnera aphidicola subsp. Baizongia pistaciae (strain Bp)</name>
    <dbReference type="NCBI Taxonomy" id="224915"/>
    <lineage>
        <taxon>Bacteria</taxon>
        <taxon>Pseudomonadati</taxon>
        <taxon>Pseudomonadota</taxon>
        <taxon>Gammaproteobacteria</taxon>
        <taxon>Enterobacterales</taxon>
        <taxon>Erwiniaceae</taxon>
        <taxon>Buchnera</taxon>
    </lineage>
</organism>
<dbReference type="EMBL" id="AE016826">
    <property type="protein sequence ID" value="AAO26961.1"/>
    <property type="molecule type" value="Genomic_DNA"/>
</dbReference>
<dbReference type="RefSeq" id="WP_011091362.1">
    <property type="nucleotide sequence ID" value="NC_004545.1"/>
</dbReference>
<dbReference type="SMR" id="Q89AN0"/>
<dbReference type="STRING" id="224915.bbp_234"/>
<dbReference type="KEGG" id="bab:bbp_234"/>
<dbReference type="eggNOG" id="COG2914">
    <property type="taxonomic scope" value="Bacteria"/>
</dbReference>
<dbReference type="HOGENOM" id="CLU_150721_0_1_6"/>
<dbReference type="OrthoDB" id="9796575at2"/>
<dbReference type="Proteomes" id="UP000000601">
    <property type="component" value="Chromosome"/>
</dbReference>
<dbReference type="Gene3D" id="3.10.20.280">
    <property type="entry name" value="RnfH-like"/>
    <property type="match status" value="1"/>
</dbReference>
<dbReference type="HAMAP" id="MF_00460">
    <property type="entry name" value="UPF0125_RnfH"/>
    <property type="match status" value="1"/>
</dbReference>
<dbReference type="InterPro" id="IPR016155">
    <property type="entry name" value="Mopterin_synth/thiamin_S_b"/>
</dbReference>
<dbReference type="InterPro" id="IPR005346">
    <property type="entry name" value="RnfH"/>
</dbReference>
<dbReference type="InterPro" id="IPR037021">
    <property type="entry name" value="RnfH_sf"/>
</dbReference>
<dbReference type="PANTHER" id="PTHR37483">
    <property type="entry name" value="UPF0125 PROTEIN RATB"/>
    <property type="match status" value="1"/>
</dbReference>
<dbReference type="PANTHER" id="PTHR37483:SF1">
    <property type="entry name" value="UPF0125 PROTEIN RATB"/>
    <property type="match status" value="1"/>
</dbReference>
<dbReference type="Pfam" id="PF03658">
    <property type="entry name" value="Ub-RnfH"/>
    <property type="match status" value="1"/>
</dbReference>
<dbReference type="SUPFAM" id="SSF54285">
    <property type="entry name" value="MoaD/ThiS"/>
    <property type="match status" value="1"/>
</dbReference>
<feature type="chain" id="PRO_0000192484" description="UPF0125 protein bbp_234">
    <location>
        <begin position="1"/>
        <end position="86"/>
    </location>
</feature>